<accession>A5UCC6</accession>
<proteinExistence type="inferred from homology"/>
<comment type="cofactor">
    <cofactor evidence="1">
        <name>Mg(2+)</name>
        <dbReference type="ChEBI" id="CHEBI:18420"/>
    </cofactor>
    <cofactor evidence="1">
        <name>Mn(2+)</name>
        <dbReference type="ChEBI" id="CHEBI:29035"/>
    </cofactor>
    <text evidence="1">Binds 2 magnesium or manganese ions per subunit.</text>
</comment>
<comment type="similarity">
    <text evidence="1">Belongs to the RimK family.</text>
</comment>
<name>RIMK_HAEIE</name>
<protein>
    <recommendedName>
        <fullName evidence="1">Probable alpha-L-glutamate ligase</fullName>
        <ecNumber evidence="1">6.3.2.-</ecNumber>
    </recommendedName>
</protein>
<evidence type="ECO:0000255" key="1">
    <source>
        <dbReference type="HAMAP-Rule" id="MF_01552"/>
    </source>
</evidence>
<feature type="chain" id="PRO_0000340540" description="Probable alpha-L-glutamate ligase">
    <location>
        <begin position="1"/>
        <end position="298"/>
    </location>
</feature>
<feature type="domain" description="ATP-grasp" evidence="1">
    <location>
        <begin position="108"/>
        <end position="290"/>
    </location>
</feature>
<feature type="binding site" evidence="1">
    <location>
        <position position="144"/>
    </location>
    <ligand>
        <name>ATP</name>
        <dbReference type="ChEBI" id="CHEBI:30616"/>
    </ligand>
</feature>
<feature type="binding site" evidence="1">
    <location>
        <begin position="181"/>
        <end position="182"/>
    </location>
    <ligand>
        <name>ATP</name>
        <dbReference type="ChEBI" id="CHEBI:30616"/>
    </ligand>
</feature>
<feature type="binding site" evidence="1">
    <location>
        <position position="190"/>
    </location>
    <ligand>
        <name>ATP</name>
        <dbReference type="ChEBI" id="CHEBI:30616"/>
    </ligand>
</feature>
<feature type="binding site" evidence="1">
    <location>
        <begin position="214"/>
        <end position="216"/>
    </location>
    <ligand>
        <name>ATP</name>
        <dbReference type="ChEBI" id="CHEBI:30616"/>
    </ligand>
</feature>
<feature type="binding site" evidence="1">
    <location>
        <position position="251"/>
    </location>
    <ligand>
        <name>Mg(2+)</name>
        <dbReference type="ChEBI" id="CHEBI:18420"/>
        <label>1</label>
    </ligand>
</feature>
<feature type="binding site" evidence="1">
    <location>
        <position position="251"/>
    </location>
    <ligand>
        <name>Mn(2+)</name>
        <dbReference type="ChEBI" id="CHEBI:29035"/>
        <label>1</label>
    </ligand>
</feature>
<feature type="binding site" evidence="1">
    <location>
        <position position="263"/>
    </location>
    <ligand>
        <name>Mg(2+)</name>
        <dbReference type="ChEBI" id="CHEBI:18420"/>
        <label>1</label>
    </ligand>
</feature>
<feature type="binding site" evidence="1">
    <location>
        <position position="263"/>
    </location>
    <ligand>
        <name>Mg(2+)</name>
        <dbReference type="ChEBI" id="CHEBI:18420"/>
        <label>2</label>
    </ligand>
</feature>
<feature type="binding site" evidence="1">
    <location>
        <position position="263"/>
    </location>
    <ligand>
        <name>Mn(2+)</name>
        <dbReference type="ChEBI" id="CHEBI:29035"/>
        <label>1</label>
    </ligand>
</feature>
<feature type="binding site" evidence="1">
    <location>
        <position position="263"/>
    </location>
    <ligand>
        <name>Mn(2+)</name>
        <dbReference type="ChEBI" id="CHEBI:29035"/>
        <label>2</label>
    </ligand>
</feature>
<feature type="binding site" evidence="1">
    <location>
        <position position="265"/>
    </location>
    <ligand>
        <name>Mg(2+)</name>
        <dbReference type="ChEBI" id="CHEBI:18420"/>
        <label>2</label>
    </ligand>
</feature>
<feature type="binding site" evidence="1">
    <location>
        <position position="265"/>
    </location>
    <ligand>
        <name>Mn(2+)</name>
        <dbReference type="ChEBI" id="CHEBI:29035"/>
        <label>2</label>
    </ligand>
</feature>
<dbReference type="EC" id="6.3.2.-" evidence="1"/>
<dbReference type="EMBL" id="CP000671">
    <property type="protein sequence ID" value="ABQ98427.1"/>
    <property type="molecule type" value="Genomic_DNA"/>
</dbReference>
<dbReference type="SMR" id="A5UCC6"/>
<dbReference type="KEGG" id="hip:CGSHiEE_05235"/>
<dbReference type="HOGENOM" id="CLU_054353_0_1_6"/>
<dbReference type="GO" id="GO:0005737">
    <property type="term" value="C:cytoplasm"/>
    <property type="evidence" value="ECO:0007669"/>
    <property type="project" value="TreeGrafter"/>
</dbReference>
<dbReference type="GO" id="GO:0005524">
    <property type="term" value="F:ATP binding"/>
    <property type="evidence" value="ECO:0007669"/>
    <property type="project" value="UniProtKB-UniRule"/>
</dbReference>
<dbReference type="GO" id="GO:0046872">
    <property type="term" value="F:metal ion binding"/>
    <property type="evidence" value="ECO:0007669"/>
    <property type="project" value="UniProtKB-KW"/>
</dbReference>
<dbReference type="GO" id="GO:0018169">
    <property type="term" value="F:ribosomal S6-glutamic acid ligase activity"/>
    <property type="evidence" value="ECO:0007669"/>
    <property type="project" value="TreeGrafter"/>
</dbReference>
<dbReference type="GO" id="GO:0036211">
    <property type="term" value="P:protein modification process"/>
    <property type="evidence" value="ECO:0007669"/>
    <property type="project" value="InterPro"/>
</dbReference>
<dbReference type="GO" id="GO:0009432">
    <property type="term" value="P:SOS response"/>
    <property type="evidence" value="ECO:0007669"/>
    <property type="project" value="TreeGrafter"/>
</dbReference>
<dbReference type="GO" id="GO:0006412">
    <property type="term" value="P:translation"/>
    <property type="evidence" value="ECO:0007669"/>
    <property type="project" value="UniProtKB-KW"/>
</dbReference>
<dbReference type="FunFam" id="3.30.470.20:FF:000058">
    <property type="entry name" value="Alpha-aminoadipate--LysW ligase LysX protein"/>
    <property type="match status" value="1"/>
</dbReference>
<dbReference type="Gene3D" id="3.40.50.20">
    <property type="match status" value="1"/>
</dbReference>
<dbReference type="Gene3D" id="3.30.1490.20">
    <property type="entry name" value="ATP-grasp fold, A domain"/>
    <property type="match status" value="1"/>
</dbReference>
<dbReference type="Gene3D" id="3.30.470.20">
    <property type="entry name" value="ATP-grasp fold, B domain"/>
    <property type="match status" value="1"/>
</dbReference>
<dbReference type="HAMAP" id="MF_01552">
    <property type="entry name" value="RimK"/>
    <property type="match status" value="1"/>
</dbReference>
<dbReference type="InterPro" id="IPR011761">
    <property type="entry name" value="ATP-grasp"/>
</dbReference>
<dbReference type="InterPro" id="IPR013651">
    <property type="entry name" value="ATP-grasp_RimK-type"/>
</dbReference>
<dbReference type="InterPro" id="IPR013815">
    <property type="entry name" value="ATP_grasp_subdomain_1"/>
</dbReference>
<dbReference type="InterPro" id="IPR023533">
    <property type="entry name" value="RimK"/>
</dbReference>
<dbReference type="InterPro" id="IPR041107">
    <property type="entry name" value="Rimk_N"/>
</dbReference>
<dbReference type="InterPro" id="IPR004666">
    <property type="entry name" value="Rp_bS6_RimK/Lys_biosynth_LsyX"/>
</dbReference>
<dbReference type="NCBIfam" id="TIGR00768">
    <property type="entry name" value="rimK_fam"/>
    <property type="match status" value="1"/>
</dbReference>
<dbReference type="PANTHER" id="PTHR21621:SF7">
    <property type="entry name" value="RIBOSOMAL PROTEIN BS6--L-GLUTAMATE LIGASE"/>
    <property type="match status" value="1"/>
</dbReference>
<dbReference type="PANTHER" id="PTHR21621">
    <property type="entry name" value="RIBOSOMAL PROTEIN S6 MODIFICATION PROTEIN"/>
    <property type="match status" value="1"/>
</dbReference>
<dbReference type="Pfam" id="PF08443">
    <property type="entry name" value="RimK"/>
    <property type="match status" value="1"/>
</dbReference>
<dbReference type="Pfam" id="PF18030">
    <property type="entry name" value="Rimk_N"/>
    <property type="match status" value="1"/>
</dbReference>
<dbReference type="SUPFAM" id="SSF56059">
    <property type="entry name" value="Glutathione synthetase ATP-binding domain-like"/>
    <property type="match status" value="1"/>
</dbReference>
<dbReference type="PROSITE" id="PS50975">
    <property type="entry name" value="ATP_GRASP"/>
    <property type="match status" value="1"/>
</dbReference>
<gene>
    <name evidence="1" type="primary">rimK</name>
    <name type="ordered locus">CGSHiEE_05235</name>
</gene>
<sequence>MLCREPRLYSCQRLKEAAKRQGHEMDILDPNRCLLKLSQNPPHFQIFYQENSGSKPYLLPDYDAVLPRFGTTSTQMGCSVLQHFEGKGTFCLNSSQAFLNARDKWKSLQLLLKTGVPVPNSFLSGGEVQAQATIPHISSPTILKMLNGSQGIGVILAEKPQSAVSIMEAFKQTNISMLQQDFIEEAGNADIRCFVIGDQVVATMQRIGQDGEFRANCHRGGKTEKIILSDDEKQIAIRATKAIGLDVAGVDLIRSKNGLLVLEVNASPGLEMIEKTSGVDIAAEIIDYIEINAFINLR</sequence>
<reference key="1">
    <citation type="journal article" date="2007" name="Genome Biol.">
        <title>Characterization and modeling of the Haemophilus influenzae core and supragenomes based on the complete genomic sequences of Rd and 12 clinical nontypeable strains.</title>
        <authorList>
            <person name="Hogg J.S."/>
            <person name="Hu F.Z."/>
            <person name="Janto B."/>
            <person name="Boissy R."/>
            <person name="Hayes J."/>
            <person name="Keefe R."/>
            <person name="Post J.C."/>
            <person name="Ehrlich G.D."/>
        </authorList>
    </citation>
    <scope>NUCLEOTIDE SEQUENCE [LARGE SCALE GENOMIC DNA]</scope>
    <source>
        <strain>PittEE</strain>
    </source>
</reference>
<organism>
    <name type="scientific">Haemophilus influenzae (strain PittEE)</name>
    <dbReference type="NCBI Taxonomy" id="374930"/>
    <lineage>
        <taxon>Bacteria</taxon>
        <taxon>Pseudomonadati</taxon>
        <taxon>Pseudomonadota</taxon>
        <taxon>Gammaproteobacteria</taxon>
        <taxon>Pasteurellales</taxon>
        <taxon>Pasteurellaceae</taxon>
        <taxon>Haemophilus</taxon>
    </lineage>
</organism>
<keyword id="KW-0067">ATP-binding</keyword>
<keyword id="KW-0436">Ligase</keyword>
<keyword id="KW-0460">Magnesium</keyword>
<keyword id="KW-0464">Manganese</keyword>
<keyword id="KW-0479">Metal-binding</keyword>
<keyword id="KW-0547">Nucleotide-binding</keyword>
<keyword id="KW-0648">Protein biosynthesis</keyword>